<feature type="chain" id="PRO_1000055393" description="Large ribosomal subunit protein uL13">
    <location>
        <begin position="1"/>
        <end position="142"/>
    </location>
</feature>
<evidence type="ECO:0000255" key="1">
    <source>
        <dbReference type="HAMAP-Rule" id="MF_01366"/>
    </source>
</evidence>
<evidence type="ECO:0000305" key="2"/>
<keyword id="KW-1185">Reference proteome</keyword>
<keyword id="KW-0687">Ribonucleoprotein</keyword>
<keyword id="KW-0689">Ribosomal protein</keyword>
<comment type="function">
    <text evidence="1">This protein is one of the early assembly proteins of the 50S ribosomal subunit, although it is not seen to bind rRNA by itself. It is important during the early stages of 50S assembly.</text>
</comment>
<comment type="subunit">
    <text evidence="1">Part of the 50S ribosomal subunit.</text>
</comment>
<comment type="similarity">
    <text evidence="1">Belongs to the universal ribosomal protein uL13 family.</text>
</comment>
<gene>
    <name evidence="1" type="primary">rplM</name>
    <name type="ordered locus">HEAR0240</name>
</gene>
<name>RL13_HERAR</name>
<sequence length="142" mass="15924">MKTFSAKGHEVQRDWFVIDATDKVLGRVASEVALRLRGKHKPEFTPHVDTGDFIVVVNAGKLRVTGTKATDKTYYRHSGYPGGIYETNFKKMQERFPGRALEKAVKGMLPKGPLGYAMIKKLKVYAEETHPHAAQQPKALEL</sequence>
<reference key="1">
    <citation type="journal article" date="2007" name="PLoS Genet.">
        <title>A tale of two oxidation states: bacterial colonization of arsenic-rich environments.</title>
        <authorList>
            <person name="Muller D."/>
            <person name="Medigue C."/>
            <person name="Koechler S."/>
            <person name="Barbe V."/>
            <person name="Barakat M."/>
            <person name="Talla E."/>
            <person name="Bonnefoy V."/>
            <person name="Krin E."/>
            <person name="Arsene-Ploetze F."/>
            <person name="Carapito C."/>
            <person name="Chandler M."/>
            <person name="Cournoyer B."/>
            <person name="Cruveiller S."/>
            <person name="Dossat C."/>
            <person name="Duval S."/>
            <person name="Heymann M."/>
            <person name="Leize E."/>
            <person name="Lieutaud A."/>
            <person name="Lievremont D."/>
            <person name="Makita Y."/>
            <person name="Mangenot S."/>
            <person name="Nitschke W."/>
            <person name="Ortet P."/>
            <person name="Perdrial N."/>
            <person name="Schoepp B."/>
            <person name="Siguier P."/>
            <person name="Simeonova D.D."/>
            <person name="Rouy Z."/>
            <person name="Segurens B."/>
            <person name="Turlin E."/>
            <person name="Vallenet D."/>
            <person name="van Dorsselaer A."/>
            <person name="Weiss S."/>
            <person name="Weissenbach J."/>
            <person name="Lett M.-C."/>
            <person name="Danchin A."/>
            <person name="Bertin P.N."/>
        </authorList>
    </citation>
    <scope>NUCLEOTIDE SEQUENCE [LARGE SCALE GENOMIC DNA]</scope>
    <source>
        <strain>ULPAs1</strain>
    </source>
</reference>
<proteinExistence type="inferred from homology"/>
<organism>
    <name type="scientific">Herminiimonas arsenicoxydans</name>
    <dbReference type="NCBI Taxonomy" id="204773"/>
    <lineage>
        <taxon>Bacteria</taxon>
        <taxon>Pseudomonadati</taxon>
        <taxon>Pseudomonadota</taxon>
        <taxon>Betaproteobacteria</taxon>
        <taxon>Burkholderiales</taxon>
        <taxon>Oxalobacteraceae</taxon>
        <taxon>Herminiimonas</taxon>
    </lineage>
</organism>
<protein>
    <recommendedName>
        <fullName evidence="1">Large ribosomal subunit protein uL13</fullName>
    </recommendedName>
    <alternativeName>
        <fullName evidence="2">50S ribosomal protein L13</fullName>
    </alternativeName>
</protein>
<accession>A4G1T2</accession>
<dbReference type="EMBL" id="CU207211">
    <property type="protein sequence ID" value="CAL60469.1"/>
    <property type="molecule type" value="Genomic_DNA"/>
</dbReference>
<dbReference type="SMR" id="A4G1T2"/>
<dbReference type="STRING" id="204773.HEAR0240"/>
<dbReference type="KEGG" id="har:HEAR0240"/>
<dbReference type="eggNOG" id="COG0102">
    <property type="taxonomic scope" value="Bacteria"/>
</dbReference>
<dbReference type="HOGENOM" id="CLU_082184_2_2_4"/>
<dbReference type="OrthoDB" id="9801330at2"/>
<dbReference type="Proteomes" id="UP000006697">
    <property type="component" value="Chromosome"/>
</dbReference>
<dbReference type="GO" id="GO:0022625">
    <property type="term" value="C:cytosolic large ribosomal subunit"/>
    <property type="evidence" value="ECO:0007669"/>
    <property type="project" value="TreeGrafter"/>
</dbReference>
<dbReference type="GO" id="GO:0003729">
    <property type="term" value="F:mRNA binding"/>
    <property type="evidence" value="ECO:0007669"/>
    <property type="project" value="TreeGrafter"/>
</dbReference>
<dbReference type="GO" id="GO:0003735">
    <property type="term" value="F:structural constituent of ribosome"/>
    <property type="evidence" value="ECO:0007669"/>
    <property type="project" value="InterPro"/>
</dbReference>
<dbReference type="GO" id="GO:0017148">
    <property type="term" value="P:negative regulation of translation"/>
    <property type="evidence" value="ECO:0007669"/>
    <property type="project" value="TreeGrafter"/>
</dbReference>
<dbReference type="GO" id="GO:0006412">
    <property type="term" value="P:translation"/>
    <property type="evidence" value="ECO:0007669"/>
    <property type="project" value="UniProtKB-UniRule"/>
</dbReference>
<dbReference type="CDD" id="cd00392">
    <property type="entry name" value="Ribosomal_L13"/>
    <property type="match status" value="1"/>
</dbReference>
<dbReference type="FunFam" id="3.90.1180.10:FF:000001">
    <property type="entry name" value="50S ribosomal protein L13"/>
    <property type="match status" value="1"/>
</dbReference>
<dbReference type="Gene3D" id="3.90.1180.10">
    <property type="entry name" value="Ribosomal protein L13"/>
    <property type="match status" value="1"/>
</dbReference>
<dbReference type="HAMAP" id="MF_01366">
    <property type="entry name" value="Ribosomal_uL13"/>
    <property type="match status" value="1"/>
</dbReference>
<dbReference type="InterPro" id="IPR005822">
    <property type="entry name" value="Ribosomal_uL13"/>
</dbReference>
<dbReference type="InterPro" id="IPR005823">
    <property type="entry name" value="Ribosomal_uL13_bac-type"/>
</dbReference>
<dbReference type="InterPro" id="IPR036899">
    <property type="entry name" value="Ribosomal_uL13_sf"/>
</dbReference>
<dbReference type="NCBIfam" id="TIGR01066">
    <property type="entry name" value="rplM_bact"/>
    <property type="match status" value="1"/>
</dbReference>
<dbReference type="PANTHER" id="PTHR11545:SF2">
    <property type="entry name" value="LARGE RIBOSOMAL SUBUNIT PROTEIN UL13M"/>
    <property type="match status" value="1"/>
</dbReference>
<dbReference type="PANTHER" id="PTHR11545">
    <property type="entry name" value="RIBOSOMAL PROTEIN L13"/>
    <property type="match status" value="1"/>
</dbReference>
<dbReference type="Pfam" id="PF00572">
    <property type="entry name" value="Ribosomal_L13"/>
    <property type="match status" value="1"/>
</dbReference>
<dbReference type="PIRSF" id="PIRSF002181">
    <property type="entry name" value="Ribosomal_L13"/>
    <property type="match status" value="1"/>
</dbReference>
<dbReference type="SUPFAM" id="SSF52161">
    <property type="entry name" value="Ribosomal protein L13"/>
    <property type="match status" value="1"/>
</dbReference>